<feature type="chain" id="PRO_0000278689" description="ClpXP adapter protein SpxH">
    <location>
        <begin position="1"/>
        <end position="268"/>
    </location>
</feature>
<feature type="mutagenesis site" description="Cannot restore wild-type level diamide susceptibility to the deletion mutant." evidence="4">
    <original>C</original>
    <variation>G</variation>
    <location>
        <position position="121"/>
    </location>
</feature>
<feature type="mutagenesis site" description="Cannot restore wild-type level diamide susceptibility to the deletion mutant." evidence="4">
    <original>C</original>
    <variation>G</variation>
    <location>
        <position position="123"/>
    </location>
</feature>
<evidence type="ECO:0000250" key="1">
    <source>
        <dbReference type="UniProtKB" id="O31606"/>
    </source>
</evidence>
<evidence type="ECO:0000255" key="2">
    <source>
        <dbReference type="HAMAP-Rule" id="MF_02245"/>
    </source>
</evidence>
<evidence type="ECO:0000269" key="3">
    <source>
    </source>
</evidence>
<evidence type="ECO:0000269" key="4">
    <source>
    </source>
</evidence>
<evidence type="ECO:0000269" key="5">
    <source>
    </source>
</evidence>
<evidence type="ECO:0000269" key="6">
    <source>
    </source>
</evidence>
<evidence type="ECO:0000303" key="7">
    <source>
    </source>
</evidence>
<evidence type="ECO:0000305" key="8"/>
<name>SPXH_STAA8</name>
<gene>
    <name evidence="2" type="primary">spxH</name>
    <name evidence="7" type="synonym">yjbH</name>
    <name type="ordered locus">SAOUHSC_00938</name>
</gene>
<accession>Q2G203</accession>
<dbReference type="EMBL" id="CP000253">
    <property type="protein sequence ID" value="ABD30063.1"/>
    <property type="molecule type" value="Genomic_DNA"/>
</dbReference>
<dbReference type="RefSeq" id="WP_000896697.1">
    <property type="nucleotide sequence ID" value="NZ_LS483365.1"/>
</dbReference>
<dbReference type="RefSeq" id="YP_499491.1">
    <property type="nucleotide sequence ID" value="NC_007795.1"/>
</dbReference>
<dbReference type="SMR" id="Q2G203"/>
<dbReference type="STRING" id="93061.SAOUHSC_00938"/>
<dbReference type="PaxDb" id="1280-SAXN108_0998"/>
<dbReference type="GeneID" id="3920767"/>
<dbReference type="KEGG" id="sao:SAOUHSC_00938"/>
<dbReference type="PATRIC" id="fig|93061.5.peg.859"/>
<dbReference type="eggNOG" id="COG2761">
    <property type="taxonomic scope" value="Bacteria"/>
</dbReference>
<dbReference type="HOGENOM" id="CLU_069785_0_0_9"/>
<dbReference type="OrthoDB" id="9813770at2"/>
<dbReference type="Proteomes" id="UP000008816">
    <property type="component" value="Chromosome"/>
</dbReference>
<dbReference type="GO" id="GO:0005737">
    <property type="term" value="C:cytoplasm"/>
    <property type="evidence" value="ECO:0007669"/>
    <property type="project" value="UniProtKB-SubCell"/>
</dbReference>
<dbReference type="Gene3D" id="3.40.30.10">
    <property type="entry name" value="Glutaredoxin"/>
    <property type="match status" value="1"/>
</dbReference>
<dbReference type="HAMAP" id="MF_02245">
    <property type="entry name" value="Adapter_SpxH"/>
    <property type="match status" value="1"/>
</dbReference>
<dbReference type="InterPro" id="IPR046404">
    <property type="entry name" value="Adapter_SpxH"/>
</dbReference>
<dbReference type="InterPro" id="IPR036249">
    <property type="entry name" value="Thioredoxin-like_sf"/>
</dbReference>
<dbReference type="PANTHER" id="PTHR13887:SF47">
    <property type="entry name" value="CLPXP ADAPTER PROTEIN SPXH"/>
    <property type="match status" value="1"/>
</dbReference>
<dbReference type="PANTHER" id="PTHR13887">
    <property type="entry name" value="GLUTATHIONE S-TRANSFERASE KAPPA"/>
    <property type="match status" value="1"/>
</dbReference>
<dbReference type="Pfam" id="PF13743">
    <property type="entry name" value="Thioredoxin_5"/>
    <property type="match status" value="1"/>
</dbReference>
<dbReference type="SUPFAM" id="SSF52833">
    <property type="entry name" value="Thioredoxin-like"/>
    <property type="match status" value="1"/>
</dbReference>
<sequence>MAGELRIMENKSREDINLSPVSKIEIYSFFDPFSSDCFKLSAILSKLRIEYNQYIRIRHILNPSLKVLTKCQAQSTSNFDNIALAYKAAELQGRVRAERFIHLMQNEIIPKRDIITESMICDCIQNAGIDLEVFKDDLQKSKLTESLKIDLHIAREMEIEQAPSLVFFSEDVHEEGLKVEGLYPYHIYTYIINELMGKPIEKNLPPKLETYIQQQQLVTMEELLTIYEWPEKLLNKELKKLAIQQKIEKLKYPDGDFWKSKMPKIKSK</sequence>
<reference key="1">
    <citation type="book" date="2006" name="Gram positive pathogens, 2nd edition">
        <title>The Staphylococcus aureus NCTC 8325 genome.</title>
        <editorList>
            <person name="Fischetti V."/>
            <person name="Novick R."/>
            <person name="Ferretti J."/>
            <person name="Portnoy D."/>
            <person name="Rood J."/>
        </editorList>
        <authorList>
            <person name="Gillaspy A.F."/>
            <person name="Worrell V."/>
            <person name="Orvis J."/>
            <person name="Roe B.A."/>
            <person name="Dyer D.W."/>
            <person name="Iandolo J.J."/>
        </authorList>
    </citation>
    <scope>NUCLEOTIDE SEQUENCE [LARGE SCALE GENOMIC DNA]</scope>
    <source>
        <strain>NCTC 8325 / PS 47</strain>
    </source>
</reference>
<reference key="2">
    <citation type="journal article" date="2006" name="J. Bacteriol.">
        <title>Investigations into sigmaB-modulated regulatory pathways governing extracellular virulence determinant production in Staphylococcus aureus.</title>
        <authorList>
            <person name="Shaw L.N."/>
            <person name="Aish J."/>
            <person name="Davenport J.E."/>
            <person name="Brown M.C."/>
            <person name="Lithgow J.K."/>
            <person name="Simmonite K."/>
            <person name="Crossley H."/>
            <person name="Travis J."/>
            <person name="Potempa J."/>
            <person name="Foster S.J."/>
        </authorList>
    </citation>
    <scope>MUTANT STUDIES</scope>
</reference>
<reference key="3">
    <citation type="journal article" date="2011" name="Antimicrob. Agents Chemother.">
        <title>New role of the disulfide stress effector YjbH in beta-lactam susceptibility of Staphylococcus aureus.</title>
        <authorList>
            <person name="Goehring N."/>
            <person name="Fedtke I."/>
            <person name="Xia G."/>
            <person name="Jorge A.M."/>
            <person name="Pinho M.G."/>
            <person name="Bertsche U."/>
            <person name="Peschel A."/>
        </authorList>
    </citation>
    <scope>FUNCTION</scope>
    <scope>DISRUPTION PHENOTYPE</scope>
    <scope>MUTAGENESIS OF CYS-121 AND CYS-123</scope>
    <source>
        <strain>ATCC 35556 / SA113</strain>
    </source>
</reference>
<reference key="4">
    <citation type="journal article" date="2012" name="J. Bacteriol.">
        <title>The YjbH adaptor protein enhances proteolysis of the transcriptional regulator Spx in Staphylococcus aureus.</title>
        <authorList>
            <person name="Engman J."/>
            <person name="Rogstam A."/>
            <person name="Frees D."/>
            <person name="Ingmer H."/>
            <person name="von Wachenfeldt C."/>
        </authorList>
    </citation>
    <scope>FUNCTION</scope>
    <scope>DISRUPTION PHENOTYPE</scope>
    <source>
        <strain>NCTC 8325-4</strain>
    </source>
</reference>
<reference key="5">
    <citation type="journal article" date="2020" name="Front. Microbiol.">
        <title>YjbH solubility controls Spx in Staphylococcus aureus: implication for MazEF toxin-antitoxin system regulation.</title>
        <authorList>
            <person name="Panasenko O.O."/>
            <person name="Bezrukov F."/>
            <person name="Komarynets O."/>
            <person name="Renzoni A."/>
        </authorList>
    </citation>
    <scope>FUNCTION</scope>
    <scope>ACTIVITY REGULATION</scope>
    <source>
        <strain>HG003</strain>
    </source>
</reference>
<keyword id="KW-0963">Cytoplasm</keyword>
<keyword id="KW-1185">Reference proteome</keyword>
<organism>
    <name type="scientific">Staphylococcus aureus (strain NCTC 8325 / PS 47)</name>
    <dbReference type="NCBI Taxonomy" id="93061"/>
    <lineage>
        <taxon>Bacteria</taxon>
        <taxon>Bacillati</taxon>
        <taxon>Bacillota</taxon>
        <taxon>Bacilli</taxon>
        <taxon>Bacillales</taxon>
        <taxon>Staphylococcaceae</taxon>
        <taxon>Staphylococcus</taxon>
    </lineage>
</organism>
<proteinExistence type="evidence at protein level"/>
<comment type="function">
    <text evidence="1 4 5 6">Adapter protein required for efficient degradation of Spx by ClpXP under non-stress conditions (PubMed:22194450, PubMed:32117138). Interaction with Spx stabilizes Spx and exposes the C-terminus of Spx for recognition and proteolysis by ClpXP (By similarity). Involved in disulfide stress regulation (PubMed:21947404).</text>
</comment>
<comment type="activity regulation">
    <text evidence="6">In non-stressed conditions, mainly remains soluble (PubMed:32117138). Forms aggregates in response to different environmental stresses such as heat shock, oxidative stress and antibiotic treatment, and cannot assist Spx degradation (PubMed:32117138).</text>
</comment>
<comment type="subunit">
    <text evidence="2">Interacts with Spx.</text>
</comment>
<comment type="subcellular location">
    <subcellularLocation>
        <location evidence="2">Cytoplasm</location>
    </subcellularLocation>
</comment>
<comment type="disruption phenotype">
    <text evidence="3 4 5">Inactivation of the gene increases the level of Spx protein and transcription of the Spx-regulated gene trxB (PubMed:22194450). Disruption leads to an increase in hla (alpha-hemolysin) transcription and proteases production (PubMed:16923874). It also leads to increased tolerance to the disulfide stress inducing compound diamide, increased peptidoglycan cross-linking, and moderate resistance to oxacillin and other beta-lactams antibiotics (PubMed:21947404).</text>
</comment>
<comment type="miscellaneous">
    <text evidence="4 5">Goehring et al. suggest that the cysteine residues are important for the role of YjbH/SpxH in disulfide stress management (PubMed:21947404). However, mutation of all seven cysteine residues in B.subtilis ortholog by Engman et al. shows that these cysteines are dispensable for the function of the protein and that the activity of the adapter is not activated or deactivated via redox-active cysteines (PubMed:22194450).</text>
</comment>
<comment type="similarity">
    <text evidence="2">Belongs to the SpxH family.</text>
</comment>
<protein>
    <recommendedName>
        <fullName evidence="2 8">ClpXP adapter protein SpxH</fullName>
    </recommendedName>
</protein>